<feature type="chain" id="PRO_1000074506" description="Alanine--tRNA ligase">
    <location>
        <begin position="1"/>
        <end position="914"/>
    </location>
</feature>
<feature type="binding site" evidence="1">
    <location>
        <position position="608"/>
    </location>
    <ligand>
        <name>Zn(2+)</name>
        <dbReference type="ChEBI" id="CHEBI:29105"/>
    </ligand>
</feature>
<feature type="binding site" evidence="1">
    <location>
        <position position="612"/>
    </location>
    <ligand>
        <name>Zn(2+)</name>
        <dbReference type="ChEBI" id="CHEBI:29105"/>
    </ligand>
</feature>
<feature type="binding site" evidence="1">
    <location>
        <position position="711"/>
    </location>
    <ligand>
        <name>Zn(2+)</name>
        <dbReference type="ChEBI" id="CHEBI:29105"/>
    </ligand>
</feature>
<feature type="binding site" evidence="1">
    <location>
        <position position="715"/>
    </location>
    <ligand>
        <name>Zn(2+)</name>
        <dbReference type="ChEBI" id="CHEBI:29105"/>
    </ligand>
</feature>
<sequence length="914" mass="101281">MLEEEYQLDYFKEQGFTRKICKSCGSAFWTRDSSREDCGDAPCVPYSFIGSPVFAPHTVDEMREAFLSFFEKNGHTRIERYPVAARWRDDIYLTIASIADFQPFVTAGVVPPPANPLTISQPCIRLNDLDSVGRSGRHLTTFEMLAHHAFNTPTEEIYWKDRTVELCDQFLASIGGDLNKVTYKEHPWIGGGNAGPSVEVMIGGLEVATLVFMSLGRQKTSHPGYDLNGEKYYPMKLRIVDTGYGLERLVWASKGSPTIYDAVFPDMVSRVMSSAGISHLLENKDYTKILAMNARFAGLMDISGSNLFNLRKKVAAAIEISPEKLDRMITPIEKVYAIVDHTRCLAYMLGDCIVPSNVREGYLARLVIRRTLRMMNEFKMQDTLADLIEEQMKIIGMDKFQQDIAVVREIVDREVEKYAITLDRGTRIVQKVAKSYKAKSQRVPLAEIITLYDSHGIPPEMIKDIAAKEGAVIDLPDNFYSQIADMHSESKKEAAPDKTAGYAERVSALPPTKKLYYEQPGDTEFEAVVIDFFDEYAVLDQTLFYPEGGGQPADTGSLVGSDSMARVDDVIKVGEVILHHISGGVLQRGERVKGMIDEERRFSLMRHHTATHILLHAAKAVLGVHIHQSGAQKGPESSRIDIRHFKHITPDELRKIEIEANRMVMANRPVEISIENRTKAEQEYGFALYQGGVPPGKDLRIVKVAGDIEACAGTHCRSTGEIGAIKILRVEHIQDGIERIEFAAGTAAVYYMQHLEQIAASSADVLSVQLENLPPTVTRFFSEWKDQKKEIERMSQRLVELEIQAIQPESIGGIPVVVKRIDLAPRELSSIATSLSEKGGVALLATPGETARIVLASGDARVNAGDIIGQLCSLLGGKGGGKPQMAQGGGPEVDKLDLALNVGRERIIAALQKK</sequence>
<gene>
    <name evidence="1" type="primary">alaS</name>
    <name type="ordered locus">Mboo_1267</name>
</gene>
<evidence type="ECO:0000255" key="1">
    <source>
        <dbReference type="HAMAP-Rule" id="MF_00036"/>
    </source>
</evidence>
<proteinExistence type="inferred from homology"/>
<keyword id="KW-0030">Aminoacyl-tRNA synthetase</keyword>
<keyword id="KW-0067">ATP-binding</keyword>
<keyword id="KW-0963">Cytoplasm</keyword>
<keyword id="KW-0436">Ligase</keyword>
<keyword id="KW-0479">Metal-binding</keyword>
<keyword id="KW-0547">Nucleotide-binding</keyword>
<keyword id="KW-0648">Protein biosynthesis</keyword>
<keyword id="KW-1185">Reference proteome</keyword>
<keyword id="KW-0694">RNA-binding</keyword>
<keyword id="KW-0820">tRNA-binding</keyword>
<keyword id="KW-0862">Zinc</keyword>
<organism>
    <name type="scientific">Methanoregula boonei (strain DSM 21154 / JCM 14090 / 6A8)</name>
    <dbReference type="NCBI Taxonomy" id="456442"/>
    <lineage>
        <taxon>Archaea</taxon>
        <taxon>Methanobacteriati</taxon>
        <taxon>Methanobacteriota</taxon>
        <taxon>Stenosarchaea group</taxon>
        <taxon>Methanomicrobia</taxon>
        <taxon>Methanomicrobiales</taxon>
        <taxon>Methanoregulaceae</taxon>
        <taxon>Methanoregula</taxon>
    </lineage>
</organism>
<dbReference type="EC" id="6.1.1.7" evidence="1"/>
<dbReference type="EMBL" id="CP000780">
    <property type="protein sequence ID" value="ABS55785.1"/>
    <property type="molecule type" value="Genomic_DNA"/>
</dbReference>
<dbReference type="RefSeq" id="WP_012106817.1">
    <property type="nucleotide sequence ID" value="NC_009712.1"/>
</dbReference>
<dbReference type="SMR" id="A7I7S4"/>
<dbReference type="STRING" id="456442.Mboo_1267"/>
<dbReference type="GeneID" id="5410354"/>
<dbReference type="KEGG" id="mbn:Mboo_1267"/>
<dbReference type="eggNOG" id="arCOG01255">
    <property type="taxonomic scope" value="Archaea"/>
</dbReference>
<dbReference type="HOGENOM" id="CLU_004485_4_0_2"/>
<dbReference type="OrthoDB" id="7506at2157"/>
<dbReference type="Proteomes" id="UP000002408">
    <property type="component" value="Chromosome"/>
</dbReference>
<dbReference type="GO" id="GO:0005737">
    <property type="term" value="C:cytoplasm"/>
    <property type="evidence" value="ECO:0007669"/>
    <property type="project" value="UniProtKB-SubCell"/>
</dbReference>
<dbReference type="GO" id="GO:0004813">
    <property type="term" value="F:alanine-tRNA ligase activity"/>
    <property type="evidence" value="ECO:0007669"/>
    <property type="project" value="UniProtKB-UniRule"/>
</dbReference>
<dbReference type="GO" id="GO:0002161">
    <property type="term" value="F:aminoacyl-tRNA deacylase activity"/>
    <property type="evidence" value="ECO:0007669"/>
    <property type="project" value="UniProtKB-ARBA"/>
</dbReference>
<dbReference type="GO" id="GO:0005524">
    <property type="term" value="F:ATP binding"/>
    <property type="evidence" value="ECO:0007669"/>
    <property type="project" value="UniProtKB-UniRule"/>
</dbReference>
<dbReference type="GO" id="GO:0000049">
    <property type="term" value="F:tRNA binding"/>
    <property type="evidence" value="ECO:0007669"/>
    <property type="project" value="UniProtKB-KW"/>
</dbReference>
<dbReference type="GO" id="GO:0008270">
    <property type="term" value="F:zinc ion binding"/>
    <property type="evidence" value="ECO:0007669"/>
    <property type="project" value="UniProtKB-UniRule"/>
</dbReference>
<dbReference type="GO" id="GO:0006419">
    <property type="term" value="P:alanyl-tRNA aminoacylation"/>
    <property type="evidence" value="ECO:0007669"/>
    <property type="project" value="UniProtKB-UniRule"/>
</dbReference>
<dbReference type="CDD" id="cd00673">
    <property type="entry name" value="AlaRS_core"/>
    <property type="match status" value="1"/>
</dbReference>
<dbReference type="FunFam" id="3.10.310.40:FF:000001">
    <property type="entry name" value="Alanine--tRNA ligase"/>
    <property type="match status" value="1"/>
</dbReference>
<dbReference type="FunFam" id="3.30.930.10:FF:000056">
    <property type="entry name" value="Alanine--tRNA ligase"/>
    <property type="match status" value="1"/>
</dbReference>
<dbReference type="FunFam" id="3.30.980.10:FF:000004">
    <property type="entry name" value="Alanine--tRNA ligase, cytoplasmic"/>
    <property type="match status" value="1"/>
</dbReference>
<dbReference type="Gene3D" id="2.40.30.130">
    <property type="match status" value="1"/>
</dbReference>
<dbReference type="Gene3D" id="3.10.310.40">
    <property type="match status" value="1"/>
</dbReference>
<dbReference type="Gene3D" id="3.30.54.20">
    <property type="match status" value="1"/>
</dbReference>
<dbReference type="Gene3D" id="6.10.250.550">
    <property type="match status" value="1"/>
</dbReference>
<dbReference type="Gene3D" id="3.30.930.10">
    <property type="entry name" value="Bira Bifunctional Protein, Domain 2"/>
    <property type="match status" value="1"/>
</dbReference>
<dbReference type="Gene3D" id="3.30.980.10">
    <property type="entry name" value="Threonyl-trna Synthetase, Chain A, domain 2"/>
    <property type="match status" value="1"/>
</dbReference>
<dbReference type="HAMAP" id="MF_00036_A">
    <property type="entry name" value="Ala_tRNA_synth_A"/>
    <property type="match status" value="1"/>
</dbReference>
<dbReference type="InterPro" id="IPR045864">
    <property type="entry name" value="aa-tRNA-synth_II/BPL/LPL"/>
</dbReference>
<dbReference type="InterPro" id="IPR002318">
    <property type="entry name" value="Ala-tRNA-lgiase_IIc"/>
</dbReference>
<dbReference type="InterPro" id="IPR018162">
    <property type="entry name" value="Ala-tRNA-ligase_IIc_anticod-bd"/>
</dbReference>
<dbReference type="InterPro" id="IPR018165">
    <property type="entry name" value="Ala-tRNA-synth_IIc_core"/>
</dbReference>
<dbReference type="InterPro" id="IPR018164">
    <property type="entry name" value="Ala-tRNA-synth_IIc_N"/>
</dbReference>
<dbReference type="InterPro" id="IPR022429">
    <property type="entry name" value="Ala-tRNA_lgiase_arc"/>
</dbReference>
<dbReference type="InterPro" id="IPR050058">
    <property type="entry name" value="Ala-tRNA_ligase"/>
</dbReference>
<dbReference type="InterPro" id="IPR003156">
    <property type="entry name" value="DHHA1_dom"/>
</dbReference>
<dbReference type="InterPro" id="IPR018163">
    <property type="entry name" value="Thr/Ala-tRNA-synth_IIc_edit"/>
</dbReference>
<dbReference type="InterPro" id="IPR009000">
    <property type="entry name" value="Transl_B-barrel_sf"/>
</dbReference>
<dbReference type="InterPro" id="IPR012947">
    <property type="entry name" value="tRNA_SAD"/>
</dbReference>
<dbReference type="NCBIfam" id="TIGR03683">
    <property type="entry name" value="A-tRNA_syn_arch"/>
    <property type="match status" value="1"/>
</dbReference>
<dbReference type="NCBIfam" id="TIGR00344">
    <property type="entry name" value="alaS"/>
    <property type="match status" value="1"/>
</dbReference>
<dbReference type="PANTHER" id="PTHR11777:SF9">
    <property type="entry name" value="ALANINE--TRNA LIGASE, CYTOPLASMIC"/>
    <property type="match status" value="1"/>
</dbReference>
<dbReference type="PANTHER" id="PTHR11777">
    <property type="entry name" value="ALANYL-TRNA SYNTHETASE"/>
    <property type="match status" value="1"/>
</dbReference>
<dbReference type="Pfam" id="PF02272">
    <property type="entry name" value="DHHA1"/>
    <property type="match status" value="1"/>
</dbReference>
<dbReference type="Pfam" id="PF01411">
    <property type="entry name" value="tRNA-synt_2c"/>
    <property type="match status" value="1"/>
</dbReference>
<dbReference type="Pfam" id="PF07973">
    <property type="entry name" value="tRNA_SAD"/>
    <property type="match status" value="1"/>
</dbReference>
<dbReference type="PRINTS" id="PR00980">
    <property type="entry name" value="TRNASYNTHALA"/>
</dbReference>
<dbReference type="SMART" id="SM00863">
    <property type="entry name" value="tRNA_SAD"/>
    <property type="match status" value="1"/>
</dbReference>
<dbReference type="SUPFAM" id="SSF55681">
    <property type="entry name" value="Class II aaRS and biotin synthetases"/>
    <property type="match status" value="1"/>
</dbReference>
<dbReference type="SUPFAM" id="SSF101353">
    <property type="entry name" value="Putative anticodon-binding domain of alanyl-tRNA synthetase (AlaRS)"/>
    <property type="match status" value="1"/>
</dbReference>
<dbReference type="SUPFAM" id="SSF55186">
    <property type="entry name" value="ThrRS/AlaRS common domain"/>
    <property type="match status" value="1"/>
</dbReference>
<dbReference type="SUPFAM" id="SSF50447">
    <property type="entry name" value="Translation proteins"/>
    <property type="match status" value="1"/>
</dbReference>
<dbReference type="PROSITE" id="PS50860">
    <property type="entry name" value="AA_TRNA_LIGASE_II_ALA"/>
    <property type="match status" value="1"/>
</dbReference>
<accession>A7I7S4</accession>
<reference key="1">
    <citation type="journal article" date="2015" name="Microbiology">
        <title>Genome of Methanoregula boonei 6A8 reveals adaptations to oligotrophic peatland environments.</title>
        <authorList>
            <person name="Braeuer S."/>
            <person name="Cadillo-Quiroz H."/>
            <person name="Kyrpides N."/>
            <person name="Woyke T."/>
            <person name="Goodwin L."/>
            <person name="Detter C."/>
            <person name="Podell S."/>
            <person name="Yavitt J.B."/>
            <person name="Zinder S.H."/>
        </authorList>
    </citation>
    <scope>NUCLEOTIDE SEQUENCE [LARGE SCALE GENOMIC DNA]</scope>
    <source>
        <strain>DSM 21154 / JCM 14090 / 6A8</strain>
    </source>
</reference>
<name>SYA_METB6</name>
<comment type="function">
    <text evidence="1">Catalyzes the attachment of alanine to tRNA(Ala) in a two-step reaction: alanine is first activated by ATP to form Ala-AMP and then transferred to the acceptor end of tRNA(Ala). Also edits incorrectly charged Ser-tRNA(Ala) and Gly-tRNA(Ala) via its editing domain.</text>
</comment>
<comment type="catalytic activity">
    <reaction evidence="1">
        <text>tRNA(Ala) + L-alanine + ATP = L-alanyl-tRNA(Ala) + AMP + diphosphate</text>
        <dbReference type="Rhea" id="RHEA:12540"/>
        <dbReference type="Rhea" id="RHEA-COMP:9657"/>
        <dbReference type="Rhea" id="RHEA-COMP:9923"/>
        <dbReference type="ChEBI" id="CHEBI:30616"/>
        <dbReference type="ChEBI" id="CHEBI:33019"/>
        <dbReference type="ChEBI" id="CHEBI:57972"/>
        <dbReference type="ChEBI" id="CHEBI:78442"/>
        <dbReference type="ChEBI" id="CHEBI:78497"/>
        <dbReference type="ChEBI" id="CHEBI:456215"/>
        <dbReference type="EC" id="6.1.1.7"/>
    </reaction>
</comment>
<comment type="cofactor">
    <cofactor evidence="1">
        <name>Zn(2+)</name>
        <dbReference type="ChEBI" id="CHEBI:29105"/>
    </cofactor>
    <text evidence="1">Binds 1 zinc ion per subunit.</text>
</comment>
<comment type="subcellular location">
    <subcellularLocation>
        <location evidence="1">Cytoplasm</location>
    </subcellularLocation>
</comment>
<comment type="domain">
    <text evidence="1">Consists of three domains; the N-terminal catalytic domain, the editing domain and the C-terminal C-Ala domain. The editing domain removes incorrectly charged amino acids, while the C-Ala domain, along with tRNA(Ala), serves as a bridge to cooperatively bring together the editing and aminoacylation centers thus stimulating deacylation of misacylated tRNAs.</text>
</comment>
<comment type="similarity">
    <text evidence="1">Belongs to the class-II aminoacyl-tRNA synthetase family.</text>
</comment>
<protein>
    <recommendedName>
        <fullName evidence="1">Alanine--tRNA ligase</fullName>
        <ecNumber evidence="1">6.1.1.7</ecNumber>
    </recommendedName>
    <alternativeName>
        <fullName evidence="1">Alanyl-tRNA synthetase</fullName>
        <shortName evidence="1">AlaRS</shortName>
    </alternativeName>
</protein>